<accession>Q8CF98</accession>
<accession>Q8C1C5</accession>
<comment type="function">
    <text evidence="1">Lectin that binds to various sugars: galactose &gt; mannose = fucose &gt; N-acetylglucosamine &gt; N-acetylgalactosamine. Acts as a chemoattractant, probably involved in the regulation of cell migration.</text>
</comment>
<comment type="subcellular location">
    <subcellularLocation>
        <location evidence="1">Secreted</location>
    </subcellularLocation>
    <subcellularLocation>
        <location evidence="6">Golgi apparatus</location>
    </subcellularLocation>
    <subcellularLocation>
        <location evidence="1">Cytoplasm</location>
    </subcellularLocation>
</comment>
<comment type="tissue specificity">
    <text evidence="5">Expressed mainly in the liver and stomach, but also in muscles, testes, and intestines.</text>
</comment>
<comment type="developmental stage">
    <text evidence="5 6">At 16 dpc expressed in the liver, amnion and visceral yolk sac. Expression is gradually increased with embryonic age (PubMed:12450124). Expressed in the epithelium and mesenchyme of the palate shelf and jaw as early as 13.5 dpc. This particular mandibular epithelial expression is still present at 18.5 dpc (PubMed:28301481).</text>
</comment>
<comment type="similarity">
    <text evidence="7">Belongs to the COLEC10/COLEC11 family.</text>
</comment>
<comment type="online information" name="Functional Glycomics Gateway - Glycan Binding">
    <link uri="http://www.functionalglycomics.org/glycomics/GBPServlet?&amp;operationType=view&amp;cbpId=cbp_mou_Ctlect_352"/>
    <text>Collectin L1</text>
</comment>
<dbReference type="EMBL" id="AB016429">
    <property type="protein sequence ID" value="BAC53954.1"/>
    <property type="molecule type" value="mRNA"/>
</dbReference>
<dbReference type="EMBL" id="AK028423">
    <property type="protein sequence ID" value="BAC25941.1"/>
    <property type="molecule type" value="mRNA"/>
</dbReference>
<dbReference type="EMBL" id="BC106836">
    <property type="protein sequence ID" value="AAI06837.1"/>
    <property type="molecule type" value="mRNA"/>
</dbReference>
<dbReference type="EMBL" id="BC106837">
    <property type="protein sequence ID" value="AAI06838.1"/>
    <property type="molecule type" value="mRNA"/>
</dbReference>
<dbReference type="EMBL" id="BC108945">
    <property type="protein sequence ID" value="AAI08946.1"/>
    <property type="molecule type" value="mRNA"/>
</dbReference>
<dbReference type="CCDS" id="CCDS27469.1"/>
<dbReference type="RefSeq" id="NP_775598.2">
    <property type="nucleotide sequence ID" value="NM_173422.3"/>
</dbReference>
<dbReference type="SMR" id="Q8CF98"/>
<dbReference type="FunCoup" id="Q8CF98">
    <property type="interactions" value="402"/>
</dbReference>
<dbReference type="STRING" id="10090.ENSMUSP00000037867"/>
<dbReference type="GlyCosmos" id="Q8CF98">
    <property type="glycosylation" value="2 sites, No reported glycans"/>
</dbReference>
<dbReference type="GlyGen" id="Q8CF98">
    <property type="glycosylation" value="2 sites"/>
</dbReference>
<dbReference type="iPTMnet" id="Q8CF98"/>
<dbReference type="PhosphoSitePlus" id="Q8CF98"/>
<dbReference type="PaxDb" id="10090-ENSMUSP00000037867"/>
<dbReference type="PeptideAtlas" id="Q8CF98"/>
<dbReference type="Antibodypedia" id="13640">
    <property type="antibodies" value="130 antibodies from 15 providers"/>
</dbReference>
<dbReference type="DNASU" id="239447"/>
<dbReference type="Ensembl" id="ENSMUST00000036737.4">
    <property type="protein sequence ID" value="ENSMUSP00000037867.4"/>
    <property type="gene ID" value="ENSMUSG00000038591.4"/>
</dbReference>
<dbReference type="GeneID" id="239447"/>
<dbReference type="KEGG" id="mmu:239447"/>
<dbReference type="UCSC" id="uc007vrl.1">
    <property type="organism name" value="mouse"/>
</dbReference>
<dbReference type="AGR" id="MGI:3606482"/>
<dbReference type="CTD" id="10584"/>
<dbReference type="MGI" id="MGI:3606482">
    <property type="gene designation" value="Colec10"/>
</dbReference>
<dbReference type="VEuPathDB" id="HostDB:ENSMUSG00000038591"/>
<dbReference type="eggNOG" id="KOG4297">
    <property type="taxonomic scope" value="Eukaryota"/>
</dbReference>
<dbReference type="GeneTree" id="ENSGT00940000159374"/>
<dbReference type="HOGENOM" id="CLU_049894_3_2_1"/>
<dbReference type="InParanoid" id="Q8CF98"/>
<dbReference type="OMA" id="FICEFLK"/>
<dbReference type="OrthoDB" id="8066719at2759"/>
<dbReference type="PhylomeDB" id="Q8CF98"/>
<dbReference type="TreeFam" id="TF330481"/>
<dbReference type="Reactome" id="R-MMU-166662">
    <property type="pathway name" value="Lectin pathway of complement activation"/>
</dbReference>
<dbReference type="Reactome" id="R-MMU-166663">
    <property type="pathway name" value="Initial triggering of complement"/>
</dbReference>
<dbReference type="BioGRID-ORCS" id="239447">
    <property type="hits" value="4 hits in 76 CRISPR screens"/>
</dbReference>
<dbReference type="PRO" id="PR:Q8CF98"/>
<dbReference type="Proteomes" id="UP000000589">
    <property type="component" value="Chromosome 15"/>
</dbReference>
<dbReference type="RNAct" id="Q8CF98">
    <property type="molecule type" value="protein"/>
</dbReference>
<dbReference type="Bgee" id="ENSMUSG00000038591">
    <property type="expression patterns" value="Expressed in migratory enteric neural crest cell and 37 other cell types or tissues"/>
</dbReference>
<dbReference type="GO" id="GO:0005581">
    <property type="term" value="C:collagen trimer"/>
    <property type="evidence" value="ECO:0007669"/>
    <property type="project" value="UniProtKB-KW"/>
</dbReference>
<dbReference type="GO" id="GO:0005829">
    <property type="term" value="C:cytosol"/>
    <property type="evidence" value="ECO:0000303"/>
    <property type="project" value="UniProtKB"/>
</dbReference>
<dbReference type="GO" id="GO:0005615">
    <property type="term" value="C:extracellular space"/>
    <property type="evidence" value="ECO:0007669"/>
    <property type="project" value="Ensembl"/>
</dbReference>
<dbReference type="GO" id="GO:0005794">
    <property type="term" value="C:Golgi apparatus"/>
    <property type="evidence" value="ECO:0007669"/>
    <property type="project" value="UniProtKB-SubCell"/>
</dbReference>
<dbReference type="GO" id="GO:0005634">
    <property type="term" value="C:nucleus"/>
    <property type="evidence" value="ECO:0000303"/>
    <property type="project" value="UniProtKB"/>
</dbReference>
<dbReference type="GO" id="GO:0042056">
    <property type="term" value="F:chemoattractant activity"/>
    <property type="evidence" value="ECO:0007669"/>
    <property type="project" value="Ensembl"/>
</dbReference>
<dbReference type="GO" id="GO:0005537">
    <property type="term" value="F:D-mannose binding"/>
    <property type="evidence" value="ECO:0000314"/>
    <property type="project" value="UniProtKB"/>
</dbReference>
<dbReference type="GO" id="GO:0001867">
    <property type="term" value="P:complement activation, lectin pathway"/>
    <property type="evidence" value="ECO:0007669"/>
    <property type="project" value="Ensembl"/>
</dbReference>
<dbReference type="GO" id="GO:1904888">
    <property type="term" value="P:cranial skeletal system development"/>
    <property type="evidence" value="ECO:0007669"/>
    <property type="project" value="Ensembl"/>
</dbReference>
<dbReference type="GO" id="GO:0006952">
    <property type="term" value="P:defense response"/>
    <property type="evidence" value="ECO:0000303"/>
    <property type="project" value="UniProtKB"/>
</dbReference>
<dbReference type="GO" id="GO:0009792">
    <property type="term" value="P:embryo development ending in birth or egg hatching"/>
    <property type="evidence" value="ECO:0000303"/>
    <property type="project" value="UniProtKB"/>
</dbReference>
<dbReference type="GO" id="GO:0007157">
    <property type="term" value="P:heterophilic cell-cell adhesion via plasma membrane cell adhesion molecules"/>
    <property type="evidence" value="ECO:0000303"/>
    <property type="project" value="UniProtKB"/>
</dbReference>
<dbReference type="GO" id="GO:1903028">
    <property type="term" value="P:positive regulation of opsonization"/>
    <property type="evidence" value="ECO:0007669"/>
    <property type="project" value="Ensembl"/>
</dbReference>
<dbReference type="GO" id="GO:0006508">
    <property type="term" value="P:proteolysis"/>
    <property type="evidence" value="ECO:0007669"/>
    <property type="project" value="Ensembl"/>
</dbReference>
<dbReference type="CDD" id="cd03591">
    <property type="entry name" value="CLECT_collectin_like"/>
    <property type="match status" value="1"/>
</dbReference>
<dbReference type="FunFam" id="3.10.100.10:FF:000005">
    <property type="entry name" value="collectin-11 isoform X1"/>
    <property type="match status" value="1"/>
</dbReference>
<dbReference type="Gene3D" id="3.10.100.10">
    <property type="entry name" value="Mannose-Binding Protein A, subunit A"/>
    <property type="match status" value="1"/>
</dbReference>
<dbReference type="InterPro" id="IPR001304">
    <property type="entry name" value="C-type_lectin-like"/>
</dbReference>
<dbReference type="InterPro" id="IPR016186">
    <property type="entry name" value="C-type_lectin-like/link_sf"/>
</dbReference>
<dbReference type="InterPro" id="IPR018378">
    <property type="entry name" value="C-type_lectin_CS"/>
</dbReference>
<dbReference type="InterPro" id="IPR051663">
    <property type="entry name" value="CLec_Tetranectin-domain"/>
</dbReference>
<dbReference type="InterPro" id="IPR008160">
    <property type="entry name" value="Collagen"/>
</dbReference>
<dbReference type="InterPro" id="IPR033990">
    <property type="entry name" value="Collectin_CTLD"/>
</dbReference>
<dbReference type="InterPro" id="IPR016187">
    <property type="entry name" value="CTDL_fold"/>
</dbReference>
<dbReference type="PANTHER" id="PTHR22799:SF1">
    <property type="entry name" value="C-TYPE LECTIN DOMAIN FAMILY 11 MEMBER A"/>
    <property type="match status" value="1"/>
</dbReference>
<dbReference type="PANTHER" id="PTHR22799">
    <property type="entry name" value="TETRANECTIN-RELATED"/>
    <property type="match status" value="1"/>
</dbReference>
<dbReference type="Pfam" id="PF01391">
    <property type="entry name" value="Collagen"/>
    <property type="match status" value="2"/>
</dbReference>
<dbReference type="Pfam" id="PF00059">
    <property type="entry name" value="Lectin_C"/>
    <property type="match status" value="1"/>
</dbReference>
<dbReference type="SMART" id="SM00034">
    <property type="entry name" value="CLECT"/>
    <property type="match status" value="1"/>
</dbReference>
<dbReference type="SUPFAM" id="SSF56436">
    <property type="entry name" value="C-type lectin-like"/>
    <property type="match status" value="1"/>
</dbReference>
<dbReference type="PROSITE" id="PS00615">
    <property type="entry name" value="C_TYPE_LECTIN_1"/>
    <property type="match status" value="1"/>
</dbReference>
<dbReference type="PROSITE" id="PS50041">
    <property type="entry name" value="C_TYPE_LECTIN_2"/>
    <property type="match status" value="1"/>
</dbReference>
<reference key="1">
    <citation type="journal article" date="2002" name="Biosci. Biotechnol. Biochem.">
        <title>Molecular cloning of mouse collectin liver 1.</title>
        <authorList>
            <person name="Kawai T."/>
            <person name="Suzuki Y."/>
            <person name="Eda S."/>
            <person name="Kase T."/>
            <person name="Ohtani K."/>
            <person name="Sakai Y."/>
            <person name="Keshi H."/>
            <person name="Fukuoh A."/>
            <person name="Sakamoto T."/>
            <person name="Nozaki M."/>
            <person name="Copeland N.G."/>
            <person name="Jenkins N.A."/>
            <person name="Wakamiya N."/>
        </authorList>
    </citation>
    <scope>NUCLEOTIDE SEQUENCE [MRNA]</scope>
    <scope>TISSUE SPECIFICITY</scope>
    <scope>DEVELOPMENTAL STAGE</scope>
    <source>
        <strain>C57BL/6J</strain>
        <tissue>Liver</tissue>
    </source>
</reference>
<reference key="2">
    <citation type="journal article" date="2005" name="Science">
        <title>The transcriptional landscape of the mammalian genome.</title>
        <authorList>
            <person name="Carninci P."/>
            <person name="Kasukawa T."/>
            <person name="Katayama S."/>
            <person name="Gough J."/>
            <person name="Frith M.C."/>
            <person name="Maeda N."/>
            <person name="Oyama R."/>
            <person name="Ravasi T."/>
            <person name="Lenhard B."/>
            <person name="Wells C."/>
            <person name="Kodzius R."/>
            <person name="Shimokawa K."/>
            <person name="Bajic V.B."/>
            <person name="Brenner S.E."/>
            <person name="Batalov S."/>
            <person name="Forrest A.R."/>
            <person name="Zavolan M."/>
            <person name="Davis M.J."/>
            <person name="Wilming L.G."/>
            <person name="Aidinis V."/>
            <person name="Allen J.E."/>
            <person name="Ambesi-Impiombato A."/>
            <person name="Apweiler R."/>
            <person name="Aturaliya R.N."/>
            <person name="Bailey T.L."/>
            <person name="Bansal M."/>
            <person name="Baxter L."/>
            <person name="Beisel K.W."/>
            <person name="Bersano T."/>
            <person name="Bono H."/>
            <person name="Chalk A.M."/>
            <person name="Chiu K.P."/>
            <person name="Choudhary V."/>
            <person name="Christoffels A."/>
            <person name="Clutterbuck D.R."/>
            <person name="Crowe M.L."/>
            <person name="Dalla E."/>
            <person name="Dalrymple B.P."/>
            <person name="de Bono B."/>
            <person name="Della Gatta G."/>
            <person name="di Bernardo D."/>
            <person name="Down T."/>
            <person name="Engstrom P."/>
            <person name="Fagiolini M."/>
            <person name="Faulkner G."/>
            <person name="Fletcher C.F."/>
            <person name="Fukushima T."/>
            <person name="Furuno M."/>
            <person name="Futaki S."/>
            <person name="Gariboldi M."/>
            <person name="Georgii-Hemming P."/>
            <person name="Gingeras T.R."/>
            <person name="Gojobori T."/>
            <person name="Green R.E."/>
            <person name="Gustincich S."/>
            <person name="Harbers M."/>
            <person name="Hayashi Y."/>
            <person name="Hensch T.K."/>
            <person name="Hirokawa N."/>
            <person name="Hill D."/>
            <person name="Huminiecki L."/>
            <person name="Iacono M."/>
            <person name="Ikeo K."/>
            <person name="Iwama A."/>
            <person name="Ishikawa T."/>
            <person name="Jakt M."/>
            <person name="Kanapin A."/>
            <person name="Katoh M."/>
            <person name="Kawasawa Y."/>
            <person name="Kelso J."/>
            <person name="Kitamura H."/>
            <person name="Kitano H."/>
            <person name="Kollias G."/>
            <person name="Krishnan S.P."/>
            <person name="Kruger A."/>
            <person name="Kummerfeld S.K."/>
            <person name="Kurochkin I.V."/>
            <person name="Lareau L.F."/>
            <person name="Lazarevic D."/>
            <person name="Lipovich L."/>
            <person name="Liu J."/>
            <person name="Liuni S."/>
            <person name="McWilliam S."/>
            <person name="Madan Babu M."/>
            <person name="Madera M."/>
            <person name="Marchionni L."/>
            <person name="Matsuda H."/>
            <person name="Matsuzawa S."/>
            <person name="Miki H."/>
            <person name="Mignone F."/>
            <person name="Miyake S."/>
            <person name="Morris K."/>
            <person name="Mottagui-Tabar S."/>
            <person name="Mulder N."/>
            <person name="Nakano N."/>
            <person name="Nakauchi H."/>
            <person name="Ng P."/>
            <person name="Nilsson R."/>
            <person name="Nishiguchi S."/>
            <person name="Nishikawa S."/>
            <person name="Nori F."/>
            <person name="Ohara O."/>
            <person name="Okazaki Y."/>
            <person name="Orlando V."/>
            <person name="Pang K.C."/>
            <person name="Pavan W.J."/>
            <person name="Pavesi G."/>
            <person name="Pesole G."/>
            <person name="Petrovsky N."/>
            <person name="Piazza S."/>
            <person name="Reed J."/>
            <person name="Reid J.F."/>
            <person name="Ring B.Z."/>
            <person name="Ringwald M."/>
            <person name="Rost B."/>
            <person name="Ruan Y."/>
            <person name="Salzberg S.L."/>
            <person name="Sandelin A."/>
            <person name="Schneider C."/>
            <person name="Schoenbach C."/>
            <person name="Sekiguchi K."/>
            <person name="Semple C.A."/>
            <person name="Seno S."/>
            <person name="Sessa L."/>
            <person name="Sheng Y."/>
            <person name="Shibata Y."/>
            <person name="Shimada H."/>
            <person name="Shimada K."/>
            <person name="Silva D."/>
            <person name="Sinclair B."/>
            <person name="Sperling S."/>
            <person name="Stupka E."/>
            <person name="Sugiura K."/>
            <person name="Sultana R."/>
            <person name="Takenaka Y."/>
            <person name="Taki K."/>
            <person name="Tammoja K."/>
            <person name="Tan S.L."/>
            <person name="Tang S."/>
            <person name="Taylor M.S."/>
            <person name="Tegner J."/>
            <person name="Teichmann S.A."/>
            <person name="Ueda H.R."/>
            <person name="van Nimwegen E."/>
            <person name="Verardo R."/>
            <person name="Wei C.L."/>
            <person name="Yagi K."/>
            <person name="Yamanishi H."/>
            <person name="Zabarovsky E."/>
            <person name="Zhu S."/>
            <person name="Zimmer A."/>
            <person name="Hide W."/>
            <person name="Bult C."/>
            <person name="Grimmond S.M."/>
            <person name="Teasdale R.D."/>
            <person name="Liu E.T."/>
            <person name="Brusic V."/>
            <person name="Quackenbush J."/>
            <person name="Wahlestedt C."/>
            <person name="Mattick J.S."/>
            <person name="Hume D.A."/>
            <person name="Kai C."/>
            <person name="Sasaki D."/>
            <person name="Tomaru Y."/>
            <person name="Fukuda S."/>
            <person name="Kanamori-Katayama M."/>
            <person name="Suzuki M."/>
            <person name="Aoki J."/>
            <person name="Arakawa T."/>
            <person name="Iida J."/>
            <person name="Imamura K."/>
            <person name="Itoh M."/>
            <person name="Kato T."/>
            <person name="Kawaji H."/>
            <person name="Kawagashira N."/>
            <person name="Kawashima T."/>
            <person name="Kojima M."/>
            <person name="Kondo S."/>
            <person name="Konno H."/>
            <person name="Nakano K."/>
            <person name="Ninomiya N."/>
            <person name="Nishio T."/>
            <person name="Okada M."/>
            <person name="Plessy C."/>
            <person name="Shibata K."/>
            <person name="Shiraki T."/>
            <person name="Suzuki S."/>
            <person name="Tagami M."/>
            <person name="Waki K."/>
            <person name="Watahiki A."/>
            <person name="Okamura-Oho Y."/>
            <person name="Suzuki H."/>
            <person name="Kawai J."/>
            <person name="Hayashizaki Y."/>
        </authorList>
    </citation>
    <scope>NUCLEOTIDE SEQUENCE [LARGE SCALE MRNA]</scope>
</reference>
<reference key="3">
    <citation type="journal article" date="2004" name="Genome Res.">
        <title>The status, quality, and expansion of the NIH full-length cDNA project: the Mammalian Gene Collection (MGC).</title>
        <authorList>
            <consortium name="The MGC Project Team"/>
        </authorList>
    </citation>
    <scope>NUCLEOTIDE SEQUENCE [LARGE SCALE MRNA]</scope>
</reference>
<reference key="4">
    <citation type="journal article" date="2017" name="PLoS Genet.">
        <title>COLEC10 is mutated in 3MC patients and regulates early craniofacial development.</title>
        <authorList>
            <person name="Munye M.M."/>
            <person name="Diaz-Font A."/>
            <person name="Ocaka L."/>
            <person name="Henriksen M.L."/>
            <person name="Lees M."/>
            <person name="Brady A."/>
            <person name="Jenkins D."/>
            <person name="Morton J."/>
            <person name="Hansen S.W."/>
            <person name="Bacchelli C."/>
            <person name="Beales P.L."/>
            <person name="Hernandez-Hernandez V."/>
        </authorList>
    </citation>
    <scope>SUBCELLULAR LOCATION</scope>
    <scope>DEVELOPMENTAL STAGE</scope>
</reference>
<evidence type="ECO:0000250" key="1">
    <source>
        <dbReference type="UniProtKB" id="Q9Y6Z7"/>
    </source>
</evidence>
<evidence type="ECO:0000255" key="2"/>
<evidence type="ECO:0000255" key="3">
    <source>
        <dbReference type="PROSITE-ProRule" id="PRU00040"/>
    </source>
</evidence>
<evidence type="ECO:0000256" key="4">
    <source>
        <dbReference type="SAM" id="MobiDB-lite"/>
    </source>
</evidence>
<evidence type="ECO:0000269" key="5">
    <source>
    </source>
</evidence>
<evidence type="ECO:0000269" key="6">
    <source>
    </source>
</evidence>
<evidence type="ECO:0000305" key="7"/>
<proteinExistence type="evidence at transcript level"/>
<name>COL10_MOUSE</name>
<sequence>MNGFRVLLRSNLSMLLLLALLHFQSLGLDVDSRSAAEVCATHTISPGPKGDDGERGDTGEEGKDGKVGRQGPKGVKGELGDMGAQGNIGKSGPIGKKGDKGEKGLLGIPGEKGKAGTICDCGRYRKVVGQLDISVARLKTSMKFIKNVIAGIRETEEKFYYIVQEEKNYRESLTHCRIRGGMLAMPKDEVVNTLIADYVAKSGFFRVFIGVNDLEREGQYVFTDNTPLQNYSNWKEEEPSDPSGHEDCVEMLSSGRWNDTECHLTMYFVCEFVKKKK</sequence>
<feature type="signal peptide" evidence="2">
    <location>
        <begin position="1"/>
        <end position="27"/>
    </location>
</feature>
<feature type="chain" id="PRO_0000314234" description="Collectin-10">
    <location>
        <begin position="28"/>
        <end position="277"/>
    </location>
</feature>
<feature type="domain" description="Collagen-like">
    <location>
        <begin position="45"/>
        <end position="103"/>
    </location>
</feature>
<feature type="domain" description="C-type lectin" evidence="3">
    <location>
        <begin position="155"/>
        <end position="271"/>
    </location>
</feature>
<feature type="region of interest" description="Disordered" evidence="4">
    <location>
        <begin position="41"/>
        <end position="103"/>
    </location>
</feature>
<feature type="compositionally biased region" description="Basic and acidic residues" evidence="4">
    <location>
        <begin position="49"/>
        <end position="67"/>
    </location>
</feature>
<feature type="glycosylation site" description="N-linked (GlcNAc...) asparagine" evidence="2">
    <location>
        <position position="11"/>
    </location>
</feature>
<feature type="glycosylation site" description="N-linked (GlcNAc...) asparagine" evidence="2">
    <location>
        <position position="258"/>
    </location>
</feature>
<feature type="disulfide bond" evidence="3">
    <location>
        <begin position="176"/>
        <end position="270"/>
    </location>
</feature>
<feature type="disulfide bond" evidence="3">
    <location>
        <begin position="248"/>
        <end position="262"/>
    </location>
</feature>
<feature type="sequence conflict" description="In Ref. 2; BAC25941." evidence="7" ref="2">
    <original>L</original>
    <variation>V</variation>
    <location>
        <position position="17"/>
    </location>
</feature>
<keyword id="KW-0106">Calcium</keyword>
<keyword id="KW-0176">Collagen</keyword>
<keyword id="KW-0963">Cytoplasm</keyword>
<keyword id="KW-1015">Disulfide bond</keyword>
<keyword id="KW-0325">Glycoprotein</keyword>
<keyword id="KW-0333">Golgi apparatus</keyword>
<keyword id="KW-0430">Lectin</keyword>
<keyword id="KW-0465">Mannose-binding</keyword>
<keyword id="KW-1185">Reference proteome</keyword>
<keyword id="KW-0964">Secreted</keyword>
<keyword id="KW-0732">Signal</keyword>
<organism>
    <name type="scientific">Mus musculus</name>
    <name type="common">Mouse</name>
    <dbReference type="NCBI Taxonomy" id="10090"/>
    <lineage>
        <taxon>Eukaryota</taxon>
        <taxon>Metazoa</taxon>
        <taxon>Chordata</taxon>
        <taxon>Craniata</taxon>
        <taxon>Vertebrata</taxon>
        <taxon>Euteleostomi</taxon>
        <taxon>Mammalia</taxon>
        <taxon>Eutheria</taxon>
        <taxon>Euarchontoglires</taxon>
        <taxon>Glires</taxon>
        <taxon>Rodentia</taxon>
        <taxon>Myomorpha</taxon>
        <taxon>Muroidea</taxon>
        <taxon>Muridae</taxon>
        <taxon>Murinae</taxon>
        <taxon>Mus</taxon>
        <taxon>Mus</taxon>
    </lineage>
</organism>
<protein>
    <recommendedName>
        <fullName>Collectin-10</fullName>
    </recommendedName>
    <alternativeName>
        <fullName>Collectin liver protein 1</fullName>
        <shortName>CL-L1</shortName>
    </alternativeName>
</protein>
<gene>
    <name type="primary">Colec10</name>
    <name type="synonym">Cll1</name>
</gene>